<protein>
    <recommendedName>
        <fullName>Uncharacterized protein YCR025C</fullName>
    </recommendedName>
</protein>
<name>YCR5_YEAST</name>
<keyword id="KW-1185">Reference proteome</keyword>
<proteinExistence type="predicted"/>
<feature type="chain" id="PRO_0000202565" description="Uncharacterized protein YCR025C">
    <location>
        <begin position="1"/>
        <end position="136"/>
    </location>
</feature>
<dbReference type="EMBL" id="X59720">
    <property type="protein sequence ID" value="CAC42977.1"/>
    <property type="molecule type" value="Genomic_DNA"/>
</dbReference>
<dbReference type="EMBL" id="BK006937">
    <property type="protein sequence ID" value="DAA80271.1"/>
    <property type="molecule type" value="Genomic_DNA"/>
</dbReference>
<dbReference type="PIR" id="S19436">
    <property type="entry name" value="S19436"/>
</dbReference>
<dbReference type="RefSeq" id="NP_001335751.1">
    <property type="nucleotide sequence ID" value="NM_001348896.1"/>
</dbReference>
<dbReference type="FunCoup" id="P25352">
    <property type="interactions" value="46"/>
</dbReference>
<dbReference type="STRING" id="4932.YCR025C"/>
<dbReference type="PaxDb" id="4932-YCR025C"/>
<dbReference type="EnsemblFungi" id="YCR025C_mRNA">
    <property type="protein sequence ID" value="YCR025C"/>
    <property type="gene ID" value="YCR025C"/>
</dbReference>
<dbReference type="GeneID" id="850390"/>
<dbReference type="AGR" id="SGD:S000000620"/>
<dbReference type="SGD" id="S000000620">
    <property type="gene designation" value="YCR025C"/>
</dbReference>
<dbReference type="HOGENOM" id="CLU_1877062_0_0_1"/>
<dbReference type="InParanoid" id="P25352"/>
<dbReference type="OrthoDB" id="10284880at2759"/>
<dbReference type="PRO" id="PR:P25352"/>
<dbReference type="Proteomes" id="UP000002311">
    <property type="component" value="Chromosome III"/>
</dbReference>
<dbReference type="RNAct" id="P25352">
    <property type="molecule type" value="protein"/>
</dbReference>
<gene>
    <name type="ordered locus">YCR025C</name>
    <name type="ORF">YCR244</name>
    <name type="ORF">YCR25C</name>
</gene>
<accession>P25352</accession>
<accession>A0A1S0T051</accession>
<accession>Q8NIM0</accession>
<sequence>MSSFGHRAFFSCCPLLEGETLHSIKLRKEATYQTQSGWPVRWPIRYPRALPLESHVHPYHMIVKLPHPRTQPRLFLWLSLHWTGIPFLGKPGIGRNRVKSKQFSHFQQSKIKTTMRKKTTNRKQKAERCQYRLVTA</sequence>
<reference key="1">
    <citation type="journal article" date="1992" name="Yeast">
        <title>The complete sequence of K3B, a 7.9 kb fragment between PGK1 and CRY1 on chromosome III, reveals the presence of seven open reading frames.</title>
        <authorList>
            <person name="Bolle P.-A."/>
            <person name="Gilliquet V."/>
            <person name="Berben G."/>
            <person name="Dumont J."/>
            <person name="Hilger F."/>
        </authorList>
    </citation>
    <scope>NUCLEOTIDE SEQUENCE [GENOMIC DNA]</scope>
</reference>
<reference key="2">
    <citation type="journal article" date="1992" name="Nature">
        <title>The complete DNA sequence of yeast chromosome III.</title>
        <authorList>
            <person name="Oliver S.G."/>
            <person name="van der Aart Q.J.M."/>
            <person name="Agostoni-Carbone M.L."/>
            <person name="Aigle M."/>
            <person name="Alberghina L."/>
            <person name="Alexandraki D."/>
            <person name="Antoine G."/>
            <person name="Anwar R."/>
            <person name="Ballesta J.P.G."/>
            <person name="Benit P."/>
            <person name="Berben G."/>
            <person name="Bergantino E."/>
            <person name="Biteau N."/>
            <person name="Bolle P.-A."/>
            <person name="Bolotin-Fukuhara M."/>
            <person name="Brown A."/>
            <person name="Brown A.J.P."/>
            <person name="Buhler J.-M."/>
            <person name="Carcano C."/>
            <person name="Carignani G."/>
            <person name="Cederberg H."/>
            <person name="Chanet R."/>
            <person name="Contreras R."/>
            <person name="Crouzet M."/>
            <person name="Daignan-Fornier B."/>
            <person name="Defoor E."/>
            <person name="Delgado M.D."/>
            <person name="Demolder J."/>
            <person name="Doira C."/>
            <person name="Dubois E."/>
            <person name="Dujon B."/>
            <person name="Duesterhoeft A."/>
            <person name="Erdmann D."/>
            <person name="Esteban M."/>
            <person name="Fabre F."/>
            <person name="Fairhead C."/>
            <person name="Faye G."/>
            <person name="Feldmann H."/>
            <person name="Fiers W."/>
            <person name="Francingues-Gaillard M.-C."/>
            <person name="Franco L."/>
            <person name="Frontali L."/>
            <person name="Fukuhara H."/>
            <person name="Fuller L.J."/>
            <person name="Galland P."/>
            <person name="Gent M.E."/>
            <person name="Gigot D."/>
            <person name="Gilliquet V."/>
            <person name="Glansdorff N."/>
            <person name="Goffeau A."/>
            <person name="Grenson M."/>
            <person name="Grisanti P."/>
            <person name="Grivell L.A."/>
            <person name="de Haan M."/>
            <person name="Haasemann M."/>
            <person name="Hatat D."/>
            <person name="Hoenicka J."/>
            <person name="Hegemann J.H."/>
            <person name="Herbert C.J."/>
            <person name="Hilger F."/>
            <person name="Hohmann S."/>
            <person name="Hollenberg C.P."/>
            <person name="Huse K."/>
            <person name="Iborra F."/>
            <person name="Indge K.J."/>
            <person name="Isono K."/>
            <person name="Jacq C."/>
            <person name="Jacquet M."/>
            <person name="James C.M."/>
            <person name="Jauniaux J.-C."/>
            <person name="Jia Y."/>
            <person name="Jimenez A."/>
            <person name="Kelly A."/>
            <person name="Kleinhans U."/>
            <person name="Kreisl P."/>
            <person name="Lanfranchi G."/>
            <person name="Lewis C."/>
            <person name="van der Linden C.G."/>
            <person name="Lucchini G."/>
            <person name="Lutzenkirchen K."/>
            <person name="Maat M.J."/>
            <person name="Mallet L."/>
            <person name="Mannhaupt G."/>
            <person name="Martegani E."/>
            <person name="Mathieu A."/>
            <person name="Maurer C.T.C."/>
            <person name="McConnell D."/>
            <person name="McKee R.A."/>
            <person name="Messenguy F."/>
            <person name="Mewes H.-W."/>
            <person name="Molemans F."/>
            <person name="Montague M.A."/>
            <person name="Muzi Falconi M."/>
            <person name="Navas L."/>
            <person name="Newlon C.S."/>
            <person name="Noone D."/>
            <person name="Pallier C."/>
            <person name="Panzeri L."/>
            <person name="Pearson B.M."/>
            <person name="Perea J."/>
            <person name="Philippsen P."/>
            <person name="Pierard A."/>
            <person name="Planta R.J."/>
            <person name="Plevani P."/>
            <person name="Poetsch B."/>
            <person name="Pohl F.M."/>
            <person name="Purnelle B."/>
            <person name="Ramezani Rad M."/>
            <person name="Rasmussen S.W."/>
            <person name="Raynal A."/>
            <person name="Remacha M.A."/>
            <person name="Richterich P."/>
            <person name="Roberts A.B."/>
            <person name="Rodriguez F."/>
            <person name="Sanz E."/>
            <person name="Schaaff-Gerstenschlaeger I."/>
            <person name="Scherens B."/>
            <person name="Schweitzer B."/>
            <person name="Shu Y."/>
            <person name="Skala J."/>
            <person name="Slonimski P.P."/>
            <person name="Sor F."/>
            <person name="Soustelle C."/>
            <person name="Spiegelberg R."/>
            <person name="Stateva L.I."/>
            <person name="Steensma H.Y."/>
            <person name="Steiner S."/>
            <person name="Thierry A."/>
            <person name="Thireos G."/>
            <person name="Tzermia M."/>
            <person name="Urrestarazu L.A."/>
            <person name="Valle G."/>
            <person name="Vetter I."/>
            <person name="van Vliet-Reedijk J.C."/>
            <person name="Voet M."/>
            <person name="Volckaert G."/>
            <person name="Vreken P."/>
            <person name="Wang H."/>
            <person name="Warmington J.R."/>
            <person name="von Wettstein D."/>
            <person name="Wicksteed B.L."/>
            <person name="Wilson C."/>
            <person name="Wurst H."/>
            <person name="Xu G."/>
            <person name="Yoshikawa A."/>
            <person name="Zimmermann F.K."/>
            <person name="Sgouros J.G."/>
        </authorList>
    </citation>
    <scope>NUCLEOTIDE SEQUENCE [LARGE SCALE GENOMIC DNA]</scope>
    <source>
        <strain>ATCC 204508 / S288c</strain>
    </source>
</reference>
<reference key="3">
    <citation type="journal article" date="2014" name="G3 (Bethesda)">
        <title>The reference genome sequence of Saccharomyces cerevisiae: Then and now.</title>
        <authorList>
            <person name="Engel S.R."/>
            <person name="Dietrich F.S."/>
            <person name="Fisk D.G."/>
            <person name="Binkley G."/>
            <person name="Balakrishnan R."/>
            <person name="Costanzo M.C."/>
            <person name="Dwight S.S."/>
            <person name="Hitz B.C."/>
            <person name="Karra K."/>
            <person name="Nash R.S."/>
            <person name="Weng S."/>
            <person name="Wong E.D."/>
            <person name="Lloyd P."/>
            <person name="Skrzypek M.S."/>
            <person name="Miyasato S.R."/>
            <person name="Simison M."/>
            <person name="Cherry J.M."/>
        </authorList>
    </citation>
    <scope>GENOME REANNOTATION</scope>
    <source>
        <strain>ATCC 204508 / S288c</strain>
    </source>
</reference>
<reference key="4">
    <citation type="submission" date="2001-06" db="EMBL/GenBank/DDBJ databases">
        <authorList>
            <person name="Valles G."/>
            <person name="Volckaerts G."/>
        </authorList>
    </citation>
    <scope>SEQUENCE REVISION TO 14; 34 AND 53</scope>
</reference>
<organism>
    <name type="scientific">Saccharomyces cerevisiae (strain ATCC 204508 / S288c)</name>
    <name type="common">Baker's yeast</name>
    <dbReference type="NCBI Taxonomy" id="559292"/>
    <lineage>
        <taxon>Eukaryota</taxon>
        <taxon>Fungi</taxon>
        <taxon>Dikarya</taxon>
        <taxon>Ascomycota</taxon>
        <taxon>Saccharomycotina</taxon>
        <taxon>Saccharomycetes</taxon>
        <taxon>Saccharomycetales</taxon>
        <taxon>Saccharomycetaceae</taxon>
        <taxon>Saccharomyces</taxon>
    </lineage>
</organism>